<name>CYSD_BRUA4</name>
<gene>
    <name evidence="1" type="primary">cysD</name>
    <name type="ordered locus">Oant_0200</name>
</gene>
<sequence length="306" mass="35265">MHHASLTKNLTHLQRLEAEAIHIFREVAASFSNPVMLYSVGKDSSVMLHLAMKAFYPAPPPFPFLHVDTTWKFREMIEFRDAQAREKGFELLVHINEDGVREGVGPFSHGSNVHTHVMKTVALRQALDKYKFDAAFGGARRDEEKSRAKERIFSFRSAQHGWDPKNQRPEMWKIYNTRVSAGESIRVFPLSNWTELDIWQYILQENIPIVPLYFAAHRPVVERDGMLIMLDDDRMKLRPGETVENRLVRFRTLGCYPLTGAIESSAADLSDIVEEMLIARTSERQGRAIDRDEAGSMEKKKREGYF</sequence>
<feature type="chain" id="PRO_0000340210" description="Sulfate adenylyltransferase subunit 2">
    <location>
        <begin position="1"/>
        <end position="306"/>
    </location>
</feature>
<comment type="function">
    <text evidence="1">With CysN forms the ATP sulfurylase (ATPS) that catalyzes the adenylation of sulfate producing adenosine 5'-phosphosulfate (APS) and diphosphate, the first enzymatic step in sulfur assimilation pathway. APS synthesis involves the formation of a high-energy phosphoric-sulfuric acid anhydride bond driven by GTP hydrolysis by CysN coupled to ATP hydrolysis by CysD.</text>
</comment>
<comment type="catalytic activity">
    <reaction evidence="1">
        <text>sulfate + ATP + H(+) = adenosine 5'-phosphosulfate + diphosphate</text>
        <dbReference type="Rhea" id="RHEA:18133"/>
        <dbReference type="ChEBI" id="CHEBI:15378"/>
        <dbReference type="ChEBI" id="CHEBI:16189"/>
        <dbReference type="ChEBI" id="CHEBI:30616"/>
        <dbReference type="ChEBI" id="CHEBI:33019"/>
        <dbReference type="ChEBI" id="CHEBI:58243"/>
        <dbReference type="EC" id="2.7.7.4"/>
    </reaction>
</comment>
<comment type="pathway">
    <text evidence="1">Sulfur metabolism; hydrogen sulfide biosynthesis; sulfite from sulfate: step 1/3.</text>
</comment>
<comment type="subunit">
    <text evidence="1">Heterodimer composed of CysD, the smaller subunit, and CysN.</text>
</comment>
<comment type="similarity">
    <text evidence="1">Belongs to the PAPS reductase family. CysD subfamily.</text>
</comment>
<organism>
    <name type="scientific">Brucella anthropi (strain ATCC 49188 / DSM 6882 / CCUG 24695 / JCM 21032 / LMG 3331 / NBRC 15819 / NCTC 12168 / Alc 37)</name>
    <name type="common">Ochrobactrum anthropi</name>
    <dbReference type="NCBI Taxonomy" id="439375"/>
    <lineage>
        <taxon>Bacteria</taxon>
        <taxon>Pseudomonadati</taxon>
        <taxon>Pseudomonadota</taxon>
        <taxon>Alphaproteobacteria</taxon>
        <taxon>Hyphomicrobiales</taxon>
        <taxon>Brucellaceae</taxon>
        <taxon>Brucella/Ochrobactrum group</taxon>
        <taxon>Brucella</taxon>
    </lineage>
</organism>
<evidence type="ECO:0000255" key="1">
    <source>
        <dbReference type="HAMAP-Rule" id="MF_00064"/>
    </source>
</evidence>
<dbReference type="EC" id="2.7.7.4" evidence="1"/>
<dbReference type="EMBL" id="CP000758">
    <property type="protein sequence ID" value="ABS12931.1"/>
    <property type="molecule type" value="Genomic_DNA"/>
</dbReference>
<dbReference type="RefSeq" id="WP_011982391.1">
    <property type="nucleotide sequence ID" value="NC_009667.1"/>
</dbReference>
<dbReference type="SMR" id="A6WVC7"/>
<dbReference type="STRING" id="439375.Oant_0200"/>
<dbReference type="KEGG" id="oan:Oant_0200"/>
<dbReference type="PATRIC" id="fig|439375.7.peg.212"/>
<dbReference type="eggNOG" id="COG0175">
    <property type="taxonomic scope" value="Bacteria"/>
</dbReference>
<dbReference type="HOGENOM" id="CLU_043026_0_0_5"/>
<dbReference type="PhylomeDB" id="A6WVC7"/>
<dbReference type="UniPathway" id="UPA00140">
    <property type="reaction ID" value="UER00204"/>
</dbReference>
<dbReference type="Proteomes" id="UP000002301">
    <property type="component" value="Chromosome 1"/>
</dbReference>
<dbReference type="GO" id="GO:0005524">
    <property type="term" value="F:ATP binding"/>
    <property type="evidence" value="ECO:0007669"/>
    <property type="project" value="UniProtKB-KW"/>
</dbReference>
<dbReference type="GO" id="GO:0004781">
    <property type="term" value="F:sulfate adenylyltransferase (ATP) activity"/>
    <property type="evidence" value="ECO:0007669"/>
    <property type="project" value="UniProtKB-UniRule"/>
</dbReference>
<dbReference type="GO" id="GO:0070814">
    <property type="term" value="P:hydrogen sulfide biosynthetic process"/>
    <property type="evidence" value="ECO:0007669"/>
    <property type="project" value="UniProtKB-UniRule"/>
</dbReference>
<dbReference type="GO" id="GO:0000103">
    <property type="term" value="P:sulfate assimilation"/>
    <property type="evidence" value="ECO:0007669"/>
    <property type="project" value="UniProtKB-UniRule"/>
</dbReference>
<dbReference type="CDD" id="cd23946">
    <property type="entry name" value="Sulfate_adenylyltransferase_2"/>
    <property type="match status" value="1"/>
</dbReference>
<dbReference type="FunFam" id="3.40.50.620:FF:000002">
    <property type="entry name" value="Sulfate adenylyltransferase subunit 2"/>
    <property type="match status" value="1"/>
</dbReference>
<dbReference type="Gene3D" id="3.40.50.620">
    <property type="entry name" value="HUPs"/>
    <property type="match status" value="1"/>
</dbReference>
<dbReference type="HAMAP" id="MF_00064">
    <property type="entry name" value="Sulf_adenylyltr_sub2"/>
    <property type="match status" value="1"/>
</dbReference>
<dbReference type="InterPro" id="IPR002500">
    <property type="entry name" value="PAPS_reduct_dom"/>
</dbReference>
<dbReference type="InterPro" id="IPR014729">
    <property type="entry name" value="Rossmann-like_a/b/a_fold"/>
</dbReference>
<dbReference type="InterPro" id="IPR011784">
    <property type="entry name" value="SO4_adenylTrfase_ssu"/>
</dbReference>
<dbReference type="InterPro" id="IPR050128">
    <property type="entry name" value="Sulfate_adenylyltrnsfr_sub2"/>
</dbReference>
<dbReference type="NCBIfam" id="TIGR02039">
    <property type="entry name" value="CysD"/>
    <property type="match status" value="1"/>
</dbReference>
<dbReference type="NCBIfam" id="NF003587">
    <property type="entry name" value="PRK05253.1"/>
    <property type="match status" value="1"/>
</dbReference>
<dbReference type="NCBIfam" id="NF009214">
    <property type="entry name" value="PRK12563.1"/>
    <property type="match status" value="1"/>
</dbReference>
<dbReference type="PANTHER" id="PTHR43196">
    <property type="entry name" value="SULFATE ADENYLYLTRANSFERASE SUBUNIT 2"/>
    <property type="match status" value="1"/>
</dbReference>
<dbReference type="PANTHER" id="PTHR43196:SF1">
    <property type="entry name" value="SULFATE ADENYLYLTRANSFERASE SUBUNIT 2"/>
    <property type="match status" value="1"/>
</dbReference>
<dbReference type="Pfam" id="PF01507">
    <property type="entry name" value="PAPS_reduct"/>
    <property type="match status" value="1"/>
</dbReference>
<dbReference type="PIRSF" id="PIRSF002936">
    <property type="entry name" value="CysDAde_trans"/>
    <property type="match status" value="1"/>
</dbReference>
<dbReference type="SUPFAM" id="SSF52402">
    <property type="entry name" value="Adenine nucleotide alpha hydrolases-like"/>
    <property type="match status" value="1"/>
</dbReference>
<accession>A6WVC7</accession>
<protein>
    <recommendedName>
        <fullName evidence="1">Sulfate adenylyltransferase subunit 2</fullName>
        <ecNumber evidence="1">2.7.7.4</ecNumber>
    </recommendedName>
    <alternativeName>
        <fullName evidence="1">ATP-sulfurylase small subunit</fullName>
    </alternativeName>
    <alternativeName>
        <fullName evidence="1">Sulfate adenylate transferase</fullName>
        <shortName evidence="1">SAT</shortName>
    </alternativeName>
</protein>
<keyword id="KW-0067">ATP-binding</keyword>
<keyword id="KW-0547">Nucleotide-binding</keyword>
<keyword id="KW-0548">Nucleotidyltransferase</keyword>
<keyword id="KW-1185">Reference proteome</keyword>
<keyword id="KW-0808">Transferase</keyword>
<reference key="1">
    <citation type="journal article" date="2011" name="J. Bacteriol.">
        <title>Genome of Ochrobactrum anthropi ATCC 49188 T, a versatile opportunistic pathogen and symbiont of several eukaryotic hosts.</title>
        <authorList>
            <person name="Chain P.S."/>
            <person name="Lang D.M."/>
            <person name="Comerci D.J."/>
            <person name="Malfatti S.A."/>
            <person name="Vergez L.M."/>
            <person name="Shin M."/>
            <person name="Ugalde R.A."/>
            <person name="Garcia E."/>
            <person name="Tolmasky M.E."/>
        </authorList>
    </citation>
    <scope>NUCLEOTIDE SEQUENCE [LARGE SCALE GENOMIC DNA]</scope>
    <source>
        <strain>ATCC 49188 / DSM 6882 / CCUG 24695 / JCM 21032 / LMG 3331 / NBRC 15819 / NCTC 12168 / Alc 37</strain>
    </source>
</reference>
<proteinExistence type="inferred from homology"/>